<organism>
    <name type="scientific">Bacillus cereus (strain ZK / E33L)</name>
    <dbReference type="NCBI Taxonomy" id="288681"/>
    <lineage>
        <taxon>Bacteria</taxon>
        <taxon>Bacillati</taxon>
        <taxon>Bacillota</taxon>
        <taxon>Bacilli</taxon>
        <taxon>Bacillales</taxon>
        <taxon>Bacillaceae</taxon>
        <taxon>Bacillus</taxon>
        <taxon>Bacillus cereus group</taxon>
    </lineage>
</organism>
<gene>
    <name evidence="1" type="primary">secA2</name>
    <name type="ordered locus">BCE33L0786</name>
</gene>
<dbReference type="EC" id="7.4.2.8" evidence="1"/>
<dbReference type="EMBL" id="CP000001">
    <property type="protein sequence ID" value="AAU19457.1"/>
    <property type="molecule type" value="Genomic_DNA"/>
</dbReference>
<dbReference type="RefSeq" id="WP_000935174.1">
    <property type="nucleotide sequence ID" value="NC_006274.1"/>
</dbReference>
<dbReference type="SMR" id="Q63FC2"/>
<dbReference type="KEGG" id="bcz:BCE33L0786"/>
<dbReference type="PATRIC" id="fig|288681.22.peg.4795"/>
<dbReference type="Proteomes" id="UP000002612">
    <property type="component" value="Chromosome"/>
</dbReference>
<dbReference type="GO" id="GO:0031522">
    <property type="term" value="C:cell envelope Sec protein transport complex"/>
    <property type="evidence" value="ECO:0007669"/>
    <property type="project" value="TreeGrafter"/>
</dbReference>
<dbReference type="GO" id="GO:0005829">
    <property type="term" value="C:cytosol"/>
    <property type="evidence" value="ECO:0007669"/>
    <property type="project" value="TreeGrafter"/>
</dbReference>
<dbReference type="GO" id="GO:0005886">
    <property type="term" value="C:plasma membrane"/>
    <property type="evidence" value="ECO:0007669"/>
    <property type="project" value="UniProtKB-SubCell"/>
</dbReference>
<dbReference type="GO" id="GO:0005524">
    <property type="term" value="F:ATP binding"/>
    <property type="evidence" value="ECO:0007669"/>
    <property type="project" value="UniProtKB-UniRule"/>
</dbReference>
<dbReference type="GO" id="GO:0008564">
    <property type="term" value="F:protein-exporting ATPase activity"/>
    <property type="evidence" value="ECO:0007669"/>
    <property type="project" value="UniProtKB-EC"/>
</dbReference>
<dbReference type="GO" id="GO:0065002">
    <property type="term" value="P:intracellular protein transmembrane transport"/>
    <property type="evidence" value="ECO:0007669"/>
    <property type="project" value="UniProtKB-UniRule"/>
</dbReference>
<dbReference type="GO" id="GO:0017038">
    <property type="term" value="P:protein import"/>
    <property type="evidence" value="ECO:0007669"/>
    <property type="project" value="InterPro"/>
</dbReference>
<dbReference type="GO" id="GO:0006605">
    <property type="term" value="P:protein targeting"/>
    <property type="evidence" value="ECO:0007669"/>
    <property type="project" value="UniProtKB-UniRule"/>
</dbReference>
<dbReference type="GO" id="GO:0043952">
    <property type="term" value="P:protein transport by the Sec complex"/>
    <property type="evidence" value="ECO:0007669"/>
    <property type="project" value="TreeGrafter"/>
</dbReference>
<dbReference type="CDD" id="cd17928">
    <property type="entry name" value="DEXDc_SecA"/>
    <property type="match status" value="1"/>
</dbReference>
<dbReference type="CDD" id="cd18803">
    <property type="entry name" value="SF2_C_secA"/>
    <property type="match status" value="1"/>
</dbReference>
<dbReference type="FunFam" id="3.40.50.300:FF:000429">
    <property type="entry name" value="Preprotein translocase subunit SecA"/>
    <property type="match status" value="1"/>
</dbReference>
<dbReference type="Gene3D" id="1.10.3060.10">
    <property type="entry name" value="Helical scaffold and wing domains of SecA"/>
    <property type="match status" value="1"/>
</dbReference>
<dbReference type="Gene3D" id="3.40.50.300">
    <property type="entry name" value="P-loop containing nucleotide triphosphate hydrolases"/>
    <property type="match status" value="3"/>
</dbReference>
<dbReference type="Gene3D" id="3.90.1440.10">
    <property type="entry name" value="SecA, preprotein cross-linking domain"/>
    <property type="match status" value="1"/>
</dbReference>
<dbReference type="HAMAP" id="MF_01382">
    <property type="entry name" value="SecA"/>
    <property type="match status" value="1"/>
</dbReference>
<dbReference type="InterPro" id="IPR014001">
    <property type="entry name" value="Helicase_ATP-bd"/>
</dbReference>
<dbReference type="InterPro" id="IPR001650">
    <property type="entry name" value="Helicase_C-like"/>
</dbReference>
<dbReference type="InterPro" id="IPR027417">
    <property type="entry name" value="P-loop_NTPase"/>
</dbReference>
<dbReference type="InterPro" id="IPR000185">
    <property type="entry name" value="SecA"/>
</dbReference>
<dbReference type="InterPro" id="IPR030908">
    <property type="entry name" value="SecA2_Bac_anthr"/>
</dbReference>
<dbReference type="InterPro" id="IPR020937">
    <property type="entry name" value="SecA_CS"/>
</dbReference>
<dbReference type="InterPro" id="IPR011115">
    <property type="entry name" value="SecA_DEAD"/>
</dbReference>
<dbReference type="InterPro" id="IPR014018">
    <property type="entry name" value="SecA_motor_DEAD"/>
</dbReference>
<dbReference type="InterPro" id="IPR011130">
    <property type="entry name" value="SecA_preprotein_X-link_dom"/>
</dbReference>
<dbReference type="InterPro" id="IPR044722">
    <property type="entry name" value="SecA_SF2_C"/>
</dbReference>
<dbReference type="InterPro" id="IPR011116">
    <property type="entry name" value="SecA_Wing/Scaffold"/>
</dbReference>
<dbReference type="InterPro" id="IPR036266">
    <property type="entry name" value="SecA_Wing/Scaffold_sf"/>
</dbReference>
<dbReference type="InterPro" id="IPR036670">
    <property type="entry name" value="SecA_X-link_sf"/>
</dbReference>
<dbReference type="NCBIfam" id="NF006630">
    <property type="entry name" value="PRK09200.1"/>
    <property type="match status" value="1"/>
</dbReference>
<dbReference type="NCBIfam" id="TIGR00963">
    <property type="entry name" value="secA"/>
    <property type="match status" value="1"/>
</dbReference>
<dbReference type="NCBIfam" id="TIGR04397">
    <property type="entry name" value="SecA2_Bac_anthr"/>
    <property type="match status" value="1"/>
</dbReference>
<dbReference type="PANTHER" id="PTHR30612:SF0">
    <property type="entry name" value="CHLOROPLAST PROTEIN-TRANSPORTING ATPASE"/>
    <property type="match status" value="1"/>
</dbReference>
<dbReference type="PANTHER" id="PTHR30612">
    <property type="entry name" value="SECA INNER MEMBRANE COMPONENT OF SEC PROTEIN SECRETION SYSTEM"/>
    <property type="match status" value="1"/>
</dbReference>
<dbReference type="Pfam" id="PF21090">
    <property type="entry name" value="P-loop_SecA"/>
    <property type="match status" value="2"/>
</dbReference>
<dbReference type="Pfam" id="PF07517">
    <property type="entry name" value="SecA_DEAD"/>
    <property type="match status" value="1"/>
</dbReference>
<dbReference type="Pfam" id="PF01043">
    <property type="entry name" value="SecA_PP_bind"/>
    <property type="match status" value="1"/>
</dbReference>
<dbReference type="Pfam" id="PF07516">
    <property type="entry name" value="SecA_SW"/>
    <property type="match status" value="1"/>
</dbReference>
<dbReference type="PRINTS" id="PR00906">
    <property type="entry name" value="SECA"/>
</dbReference>
<dbReference type="SMART" id="SM00957">
    <property type="entry name" value="SecA_DEAD"/>
    <property type="match status" value="1"/>
</dbReference>
<dbReference type="SMART" id="SM00958">
    <property type="entry name" value="SecA_PP_bind"/>
    <property type="match status" value="1"/>
</dbReference>
<dbReference type="SUPFAM" id="SSF81886">
    <property type="entry name" value="Helical scaffold and wing domains of SecA"/>
    <property type="match status" value="1"/>
</dbReference>
<dbReference type="SUPFAM" id="SSF52540">
    <property type="entry name" value="P-loop containing nucleoside triphosphate hydrolases"/>
    <property type="match status" value="2"/>
</dbReference>
<dbReference type="SUPFAM" id="SSF81767">
    <property type="entry name" value="Pre-protein crosslinking domain of SecA"/>
    <property type="match status" value="1"/>
</dbReference>
<dbReference type="PROSITE" id="PS01312">
    <property type="entry name" value="SECA"/>
    <property type="match status" value="1"/>
</dbReference>
<dbReference type="PROSITE" id="PS51196">
    <property type="entry name" value="SECA_MOTOR_DEAD"/>
    <property type="match status" value="1"/>
</dbReference>
<comment type="function">
    <text evidence="1">Part of the Sec protein translocase complex. Interacts with the SecYEG preprotein conducting channel. Has a central role in coupling the hydrolysis of ATP to the transfer of proteins into and across the cell membrane, serving as an ATP-driven molecular motor driving the stepwise translocation of polypeptide chains across the membrane.</text>
</comment>
<comment type="catalytic activity">
    <reaction evidence="1">
        <text>ATP + H2O + cellular proteinSide 1 = ADP + phosphate + cellular proteinSide 2.</text>
        <dbReference type="EC" id="7.4.2.8"/>
    </reaction>
</comment>
<comment type="subunit">
    <text evidence="1">Monomer and homodimer. Part of the essential Sec protein translocation apparatus which comprises SecA, SecYEG and auxiliary proteins SecDF. Other proteins may also be involved.</text>
</comment>
<comment type="subcellular location">
    <subcellularLocation>
        <location evidence="1">Cell membrane</location>
        <topology evidence="1">Peripheral membrane protein</topology>
        <orientation evidence="1">Cytoplasmic side</orientation>
    </subcellularLocation>
    <subcellularLocation>
        <location evidence="1">Cytoplasm</location>
    </subcellularLocation>
    <text evidence="1">Distribution is 50-50.</text>
</comment>
<comment type="similarity">
    <text evidence="1">Belongs to the SecA family.</text>
</comment>
<accession>Q63FC2</accession>
<keyword id="KW-0067">ATP-binding</keyword>
<keyword id="KW-1003">Cell membrane</keyword>
<keyword id="KW-0963">Cytoplasm</keyword>
<keyword id="KW-0472">Membrane</keyword>
<keyword id="KW-0547">Nucleotide-binding</keyword>
<keyword id="KW-0653">Protein transport</keyword>
<keyword id="KW-1278">Translocase</keyword>
<keyword id="KW-0811">Translocation</keyword>
<keyword id="KW-0813">Transport</keyword>
<name>SECA2_BACCZ</name>
<sequence length="788" mass="89517">MLNSVKKLLGDSQKRKLKKYEQLVQEINNLEEKLSDLSDEELRHKTITFKDMLRDGKTVDDIKVEAFAVVREAAKRVLGLRHYDVQLIGGLVLLEGNIAEMPTGEGKTLVSSLPTYVRALEGKGVHVITVNDYLAKRDKELIGQVHEFLGLKVGLNIPQIDPSEKKLAYEADITYGIGTEFGFDYLRDNMAASKNEQVQRPYHFAIIDEIDSVLIDEAKTPLIIAGKKSSSSDLHYLCAKVIKSFQDTLHYTYDAESKSASFTEDGITKIEDLFDIDNLYDLEHQTLYHYMIQALRAHVAFQCDVDYIVHDEKILLVDIFTGRVMDGRSLSDGLHQALEAKEGLEITEENQTQASITIQNFFRMYPALSGMTGTAKTEEKEFNRVYNMEVIPIPTNRPIIREDKKDVVYVTADAKYKAVREDVLKHNKQGRPILIGTMSILQSETVARYLDEANITYQLLNAKSAEQEADLIATAGQKGQITIATNMAGRGTDILLGEGVHELGGLHVIGTERHESRRVDNQLKGRAGRQGDPGSSQFFLSLEDEMLKRFAQEEIEKLTKSLKTDETGLILTAKVHDFVNRTQLICEGSHFSMREYNLKLDDVINDQRNVIYKLRNNLLQEDTNMIEIIIPMIDHAVEAISKQYLVEGMLPEEWDFASLTASLNEILSVENMPSLSANNVHSPEDLQSVLKETLSLYKERVNELDSNTDLQQSLRYVALHFLDQNWVNHLDAMTHLKEGIGLRQYQQEDPTRLYQKEALDIFLYTYGNFEKEMCRYVARHLGVPENVQ</sequence>
<protein>
    <recommendedName>
        <fullName evidence="1">Protein translocase subunit SecA 2</fullName>
        <ecNumber evidence="1">7.4.2.8</ecNumber>
    </recommendedName>
</protein>
<evidence type="ECO:0000255" key="1">
    <source>
        <dbReference type="HAMAP-Rule" id="MF_01382"/>
    </source>
</evidence>
<feature type="chain" id="PRO_0000318315" description="Protein translocase subunit SecA 2">
    <location>
        <begin position="1"/>
        <end position="788"/>
    </location>
</feature>
<feature type="binding site" evidence="1">
    <location>
        <position position="86"/>
    </location>
    <ligand>
        <name>ATP</name>
        <dbReference type="ChEBI" id="CHEBI:30616"/>
    </ligand>
</feature>
<feature type="binding site" evidence="1">
    <location>
        <begin position="104"/>
        <end position="108"/>
    </location>
    <ligand>
        <name>ATP</name>
        <dbReference type="ChEBI" id="CHEBI:30616"/>
    </ligand>
</feature>
<feature type="binding site" evidence="1">
    <location>
        <position position="493"/>
    </location>
    <ligand>
        <name>ATP</name>
        <dbReference type="ChEBI" id="CHEBI:30616"/>
    </ligand>
</feature>
<reference key="1">
    <citation type="journal article" date="2006" name="J. Bacteriol.">
        <title>Pathogenomic sequence analysis of Bacillus cereus and Bacillus thuringiensis isolates closely related to Bacillus anthracis.</title>
        <authorList>
            <person name="Han C.S."/>
            <person name="Xie G."/>
            <person name="Challacombe J.F."/>
            <person name="Altherr M.R."/>
            <person name="Bhotika S.S."/>
            <person name="Bruce D."/>
            <person name="Campbell C.S."/>
            <person name="Campbell M.L."/>
            <person name="Chen J."/>
            <person name="Chertkov O."/>
            <person name="Cleland C."/>
            <person name="Dimitrijevic M."/>
            <person name="Doggett N.A."/>
            <person name="Fawcett J.J."/>
            <person name="Glavina T."/>
            <person name="Goodwin L.A."/>
            <person name="Hill K.K."/>
            <person name="Hitchcock P."/>
            <person name="Jackson P.J."/>
            <person name="Keim P."/>
            <person name="Kewalramani A.R."/>
            <person name="Longmire J."/>
            <person name="Lucas S."/>
            <person name="Malfatti S."/>
            <person name="McMurry K."/>
            <person name="Meincke L.J."/>
            <person name="Misra M."/>
            <person name="Moseman B.L."/>
            <person name="Mundt M."/>
            <person name="Munk A.C."/>
            <person name="Okinaka R.T."/>
            <person name="Parson-Quintana B."/>
            <person name="Reilly L.P."/>
            <person name="Richardson P."/>
            <person name="Robinson D.L."/>
            <person name="Rubin E."/>
            <person name="Saunders E."/>
            <person name="Tapia R."/>
            <person name="Tesmer J.G."/>
            <person name="Thayer N."/>
            <person name="Thompson L.S."/>
            <person name="Tice H."/>
            <person name="Ticknor L.O."/>
            <person name="Wills P.L."/>
            <person name="Brettin T.S."/>
            <person name="Gilna P."/>
        </authorList>
    </citation>
    <scope>NUCLEOTIDE SEQUENCE [LARGE SCALE GENOMIC DNA]</scope>
    <source>
        <strain>ZK / E33L</strain>
    </source>
</reference>
<proteinExistence type="inferred from homology"/>